<name>PSBJ_NICSY</name>
<protein>
    <recommendedName>
        <fullName evidence="1">Photosystem II reaction center protein J</fullName>
        <shortName evidence="1">PSII-J</shortName>
    </recommendedName>
</protein>
<sequence>MADTTGRIPLWIIGTVAGILVIGLIGIFFYGSYSGLGSSL</sequence>
<feature type="chain" id="PRO_0000276103" description="Photosystem II reaction center protein J">
    <location>
        <begin position="1"/>
        <end position="40"/>
    </location>
</feature>
<feature type="transmembrane region" description="Helical" evidence="1">
    <location>
        <begin position="8"/>
        <end position="28"/>
    </location>
</feature>
<reference key="1">
    <citation type="journal article" date="2006" name="Mol. Genet. Genomics">
        <title>The chloroplast genome of Nicotiana sylvestris and Nicotiana tomentosiformis: complete sequencing confirms that the Nicotiana sylvestris progenitor is the maternal genome donor of Nicotiana tabacum.</title>
        <authorList>
            <person name="Yukawa M."/>
            <person name="Tsudzuki T."/>
            <person name="Sugiura M."/>
        </authorList>
    </citation>
    <scope>NUCLEOTIDE SEQUENCE [LARGE SCALE GENOMIC DNA]</scope>
</reference>
<dbReference type="EMBL" id="AB237912">
    <property type="protein sequence ID" value="BAE46667.1"/>
    <property type="molecule type" value="Genomic_DNA"/>
</dbReference>
<dbReference type="RefSeq" id="YP_358692.1">
    <property type="nucleotide sequence ID" value="NC_007500.1"/>
</dbReference>
<dbReference type="SMR" id="Q3C1I6"/>
<dbReference type="GeneID" id="3735109"/>
<dbReference type="KEGG" id="nsy:3735109"/>
<dbReference type="Proteomes" id="UP000189701">
    <property type="component" value="Chloroplast Pltd"/>
</dbReference>
<dbReference type="GO" id="GO:0009535">
    <property type="term" value="C:chloroplast thylakoid membrane"/>
    <property type="evidence" value="ECO:0007669"/>
    <property type="project" value="UniProtKB-SubCell"/>
</dbReference>
<dbReference type="GO" id="GO:0009539">
    <property type="term" value="C:photosystem II reaction center"/>
    <property type="evidence" value="ECO:0007669"/>
    <property type="project" value="InterPro"/>
</dbReference>
<dbReference type="GO" id="GO:0015979">
    <property type="term" value="P:photosynthesis"/>
    <property type="evidence" value="ECO:0007669"/>
    <property type="project" value="UniProtKB-UniRule"/>
</dbReference>
<dbReference type="Gene3D" id="6.10.250.2070">
    <property type="match status" value="1"/>
</dbReference>
<dbReference type="HAMAP" id="MF_01305">
    <property type="entry name" value="PSII_PsbJ"/>
    <property type="match status" value="1"/>
</dbReference>
<dbReference type="InterPro" id="IPR002682">
    <property type="entry name" value="PSII_PsbJ"/>
</dbReference>
<dbReference type="InterPro" id="IPR037267">
    <property type="entry name" value="PSII_PsbJ_sf"/>
</dbReference>
<dbReference type="NCBIfam" id="NF002722">
    <property type="entry name" value="PRK02565.1"/>
    <property type="match status" value="1"/>
</dbReference>
<dbReference type="PANTHER" id="PTHR34812">
    <property type="entry name" value="PHOTOSYSTEM II REACTION CENTER PROTEIN J"/>
    <property type="match status" value="1"/>
</dbReference>
<dbReference type="PANTHER" id="PTHR34812:SF3">
    <property type="entry name" value="PHOTOSYSTEM II REACTION CENTER PROTEIN J"/>
    <property type="match status" value="1"/>
</dbReference>
<dbReference type="Pfam" id="PF01788">
    <property type="entry name" value="PsbJ"/>
    <property type="match status" value="1"/>
</dbReference>
<dbReference type="SUPFAM" id="SSF161021">
    <property type="entry name" value="Photosystem II reaction center protein J, PsbJ"/>
    <property type="match status" value="1"/>
</dbReference>
<comment type="function">
    <text evidence="1">One of the components of the core complex of photosystem II (PSII). PSII is a light-driven water:plastoquinone oxidoreductase that uses light energy to abstract electrons from H(2)O, generating O(2) and a proton gradient subsequently used for ATP formation. It consists of a core antenna complex that captures photons, and an electron transfer chain that converts photonic excitation into a charge separation.</text>
</comment>
<comment type="subunit">
    <text evidence="1">PSII is composed of 1 copy each of membrane proteins PsbA, PsbB, PsbC, PsbD, PsbE, PsbF, PsbH, PsbI, PsbJ, PsbK, PsbL, PsbM, PsbT, PsbX, PsbY, PsbZ, Psb30/Ycf12, at least 3 peripheral proteins of the oxygen-evolving complex and a large number of cofactors. It forms dimeric complexes.</text>
</comment>
<comment type="subcellular location">
    <subcellularLocation>
        <location evidence="1">Plastid</location>
        <location evidence="1">Chloroplast thylakoid membrane</location>
        <topology evidence="1">Single-pass membrane protein</topology>
    </subcellularLocation>
</comment>
<comment type="similarity">
    <text evidence="1">Belongs to the PsbJ family.</text>
</comment>
<accession>Q3C1I6</accession>
<gene>
    <name evidence="1" type="primary">psbJ</name>
</gene>
<organism>
    <name type="scientific">Nicotiana sylvestris</name>
    <name type="common">Wood tobacco</name>
    <name type="synonym">South American tobacco</name>
    <dbReference type="NCBI Taxonomy" id="4096"/>
    <lineage>
        <taxon>Eukaryota</taxon>
        <taxon>Viridiplantae</taxon>
        <taxon>Streptophyta</taxon>
        <taxon>Embryophyta</taxon>
        <taxon>Tracheophyta</taxon>
        <taxon>Spermatophyta</taxon>
        <taxon>Magnoliopsida</taxon>
        <taxon>eudicotyledons</taxon>
        <taxon>Gunneridae</taxon>
        <taxon>Pentapetalae</taxon>
        <taxon>asterids</taxon>
        <taxon>lamiids</taxon>
        <taxon>Solanales</taxon>
        <taxon>Solanaceae</taxon>
        <taxon>Nicotianoideae</taxon>
        <taxon>Nicotianeae</taxon>
        <taxon>Nicotiana</taxon>
    </lineage>
</organism>
<keyword id="KW-0150">Chloroplast</keyword>
<keyword id="KW-0472">Membrane</keyword>
<keyword id="KW-0602">Photosynthesis</keyword>
<keyword id="KW-0604">Photosystem II</keyword>
<keyword id="KW-0934">Plastid</keyword>
<keyword id="KW-0674">Reaction center</keyword>
<keyword id="KW-1185">Reference proteome</keyword>
<keyword id="KW-0793">Thylakoid</keyword>
<keyword id="KW-0812">Transmembrane</keyword>
<keyword id="KW-1133">Transmembrane helix</keyword>
<geneLocation type="chloroplast"/>
<proteinExistence type="inferred from homology"/>
<evidence type="ECO:0000255" key="1">
    <source>
        <dbReference type="HAMAP-Rule" id="MF_01305"/>
    </source>
</evidence>